<dbReference type="EC" id="7.1.1.-" evidence="1"/>
<dbReference type="EMBL" id="AJ749949">
    <property type="protein sequence ID" value="CAG44665.1"/>
    <property type="molecule type" value="Genomic_DNA"/>
</dbReference>
<dbReference type="RefSeq" id="WP_003017394.1">
    <property type="nucleotide sequence ID" value="NZ_CP010290.1"/>
</dbReference>
<dbReference type="RefSeq" id="YP_169108.1">
    <property type="nucleotide sequence ID" value="NC_006570.2"/>
</dbReference>
<dbReference type="SMR" id="Q5NIN4"/>
<dbReference type="STRING" id="177416.FTT_0032"/>
<dbReference type="DNASU" id="3191756"/>
<dbReference type="EnsemblBacteria" id="CAG44665">
    <property type="protein sequence ID" value="CAG44665"/>
    <property type="gene ID" value="FTT_0032"/>
</dbReference>
<dbReference type="KEGG" id="ftu:FTT_0032"/>
<dbReference type="eggNOG" id="COG0377">
    <property type="taxonomic scope" value="Bacteria"/>
</dbReference>
<dbReference type="OrthoDB" id="9786737at2"/>
<dbReference type="Proteomes" id="UP000001174">
    <property type="component" value="Chromosome"/>
</dbReference>
<dbReference type="GO" id="GO:0005886">
    <property type="term" value="C:plasma membrane"/>
    <property type="evidence" value="ECO:0007669"/>
    <property type="project" value="UniProtKB-SubCell"/>
</dbReference>
<dbReference type="GO" id="GO:0045271">
    <property type="term" value="C:respiratory chain complex I"/>
    <property type="evidence" value="ECO:0007669"/>
    <property type="project" value="TreeGrafter"/>
</dbReference>
<dbReference type="GO" id="GO:0051539">
    <property type="term" value="F:4 iron, 4 sulfur cluster binding"/>
    <property type="evidence" value="ECO:0007669"/>
    <property type="project" value="UniProtKB-KW"/>
</dbReference>
<dbReference type="GO" id="GO:0005506">
    <property type="term" value="F:iron ion binding"/>
    <property type="evidence" value="ECO:0007669"/>
    <property type="project" value="UniProtKB-UniRule"/>
</dbReference>
<dbReference type="GO" id="GO:0008137">
    <property type="term" value="F:NADH dehydrogenase (ubiquinone) activity"/>
    <property type="evidence" value="ECO:0007669"/>
    <property type="project" value="InterPro"/>
</dbReference>
<dbReference type="GO" id="GO:0050136">
    <property type="term" value="F:NADH:ubiquinone reductase (non-electrogenic) activity"/>
    <property type="evidence" value="ECO:0007669"/>
    <property type="project" value="UniProtKB-UniRule"/>
</dbReference>
<dbReference type="GO" id="GO:0048038">
    <property type="term" value="F:quinone binding"/>
    <property type="evidence" value="ECO:0007669"/>
    <property type="project" value="UniProtKB-KW"/>
</dbReference>
<dbReference type="GO" id="GO:0009060">
    <property type="term" value="P:aerobic respiration"/>
    <property type="evidence" value="ECO:0007669"/>
    <property type="project" value="TreeGrafter"/>
</dbReference>
<dbReference type="GO" id="GO:0015990">
    <property type="term" value="P:electron transport coupled proton transport"/>
    <property type="evidence" value="ECO:0007669"/>
    <property type="project" value="TreeGrafter"/>
</dbReference>
<dbReference type="FunFam" id="3.40.50.12280:FF:000001">
    <property type="entry name" value="NADH-quinone oxidoreductase subunit B 2"/>
    <property type="match status" value="1"/>
</dbReference>
<dbReference type="Gene3D" id="3.40.50.12280">
    <property type="match status" value="1"/>
</dbReference>
<dbReference type="HAMAP" id="MF_01356">
    <property type="entry name" value="NDH1_NuoB"/>
    <property type="match status" value="1"/>
</dbReference>
<dbReference type="InterPro" id="IPR006137">
    <property type="entry name" value="NADH_UbQ_OxRdtase-like_20kDa"/>
</dbReference>
<dbReference type="InterPro" id="IPR006138">
    <property type="entry name" value="NADH_UQ_OxRdtase_20Kd_su"/>
</dbReference>
<dbReference type="NCBIfam" id="TIGR01957">
    <property type="entry name" value="nuoB_fam"/>
    <property type="match status" value="1"/>
</dbReference>
<dbReference type="NCBIfam" id="NF005012">
    <property type="entry name" value="PRK06411.1"/>
    <property type="match status" value="1"/>
</dbReference>
<dbReference type="PANTHER" id="PTHR11995">
    <property type="entry name" value="NADH DEHYDROGENASE"/>
    <property type="match status" value="1"/>
</dbReference>
<dbReference type="PANTHER" id="PTHR11995:SF14">
    <property type="entry name" value="NADH DEHYDROGENASE [UBIQUINONE] IRON-SULFUR PROTEIN 7, MITOCHONDRIAL"/>
    <property type="match status" value="1"/>
</dbReference>
<dbReference type="Pfam" id="PF01058">
    <property type="entry name" value="Oxidored_q6"/>
    <property type="match status" value="1"/>
</dbReference>
<dbReference type="SUPFAM" id="SSF56770">
    <property type="entry name" value="HydA/Nqo6-like"/>
    <property type="match status" value="1"/>
</dbReference>
<dbReference type="PROSITE" id="PS01150">
    <property type="entry name" value="COMPLEX1_20K"/>
    <property type="match status" value="1"/>
</dbReference>
<protein>
    <recommendedName>
        <fullName evidence="1">NADH-quinone oxidoreductase subunit B</fullName>
        <ecNumber evidence="1">7.1.1.-</ecNumber>
    </recommendedName>
    <alternativeName>
        <fullName evidence="1">NADH dehydrogenase I subunit B</fullName>
    </alternativeName>
    <alternativeName>
        <fullName evidence="1">NDH-1 subunit B</fullName>
    </alternativeName>
</protein>
<gene>
    <name evidence="1" type="primary">nuoB</name>
    <name type="ordered locus">FTT_0032</name>
</gene>
<organism>
    <name type="scientific">Francisella tularensis subsp. tularensis (strain SCHU S4 / Schu 4)</name>
    <dbReference type="NCBI Taxonomy" id="177416"/>
    <lineage>
        <taxon>Bacteria</taxon>
        <taxon>Pseudomonadati</taxon>
        <taxon>Pseudomonadota</taxon>
        <taxon>Gammaproteobacteria</taxon>
        <taxon>Thiotrichales</taxon>
        <taxon>Francisellaceae</taxon>
        <taxon>Francisella</taxon>
    </lineage>
</organism>
<name>NUOB_FRATT</name>
<reference key="1">
    <citation type="journal article" date="2005" name="Nat. Genet.">
        <title>The complete genome sequence of Francisella tularensis, the causative agent of tularemia.</title>
        <authorList>
            <person name="Larsson P."/>
            <person name="Oyston P.C.F."/>
            <person name="Chain P."/>
            <person name="Chu M.C."/>
            <person name="Duffield M."/>
            <person name="Fuxelius H.-H."/>
            <person name="Garcia E."/>
            <person name="Haelltorp G."/>
            <person name="Johansson D."/>
            <person name="Isherwood K.E."/>
            <person name="Karp P.D."/>
            <person name="Larsson E."/>
            <person name="Liu Y."/>
            <person name="Michell S."/>
            <person name="Prior J."/>
            <person name="Prior R."/>
            <person name="Malfatti S."/>
            <person name="Sjoestedt A."/>
            <person name="Svensson K."/>
            <person name="Thompson N."/>
            <person name="Vergez L."/>
            <person name="Wagg J.K."/>
            <person name="Wren B.W."/>
            <person name="Lindler L.E."/>
            <person name="Andersson S.G.E."/>
            <person name="Forsman M."/>
            <person name="Titball R.W."/>
        </authorList>
    </citation>
    <scope>NUCLEOTIDE SEQUENCE [LARGE SCALE GENOMIC DNA]</scope>
    <source>
        <strain>SCHU S4 / Schu 4</strain>
    </source>
</reference>
<feature type="chain" id="PRO_1000166656" description="NADH-quinone oxidoreductase subunit B">
    <location>
        <begin position="1"/>
        <end position="158"/>
    </location>
</feature>
<feature type="binding site" evidence="1">
    <location>
        <position position="36"/>
    </location>
    <ligand>
        <name>[4Fe-4S] cluster</name>
        <dbReference type="ChEBI" id="CHEBI:49883"/>
    </ligand>
</feature>
<feature type="binding site" evidence="1">
    <location>
        <position position="37"/>
    </location>
    <ligand>
        <name>[4Fe-4S] cluster</name>
        <dbReference type="ChEBI" id="CHEBI:49883"/>
    </ligand>
</feature>
<feature type="binding site" evidence="1">
    <location>
        <position position="101"/>
    </location>
    <ligand>
        <name>[4Fe-4S] cluster</name>
        <dbReference type="ChEBI" id="CHEBI:49883"/>
    </ligand>
</feature>
<feature type="binding site" evidence="1">
    <location>
        <position position="131"/>
    </location>
    <ligand>
        <name>[4Fe-4S] cluster</name>
        <dbReference type="ChEBI" id="CHEBI:49883"/>
    </ligand>
</feature>
<sequence>MGIGNENKGFITASADALINWVRTGSLWPVTTGLACCAVEMMHAGAARYDLDRFGIVFRPSPRQSDVLIVAGTLCNKMAPALRQVYDQMPDPKWVISMGSCANGGGYYHYSYSVVRGCDRIVPVDIYVPGCPPTAEALVYGIIQLQNKIIRKDTIARK</sequence>
<comment type="function">
    <text evidence="1">NDH-1 shuttles electrons from NADH, via FMN and iron-sulfur (Fe-S) centers, to quinones in the respiratory chain. The immediate electron acceptor for the enzyme in this species is believed to be ubiquinone. Couples the redox reaction to proton translocation (for every two electrons transferred, four hydrogen ions are translocated across the cytoplasmic membrane), and thus conserves the redox energy in a proton gradient.</text>
</comment>
<comment type="catalytic activity">
    <reaction evidence="1">
        <text>a quinone + NADH + 5 H(+)(in) = a quinol + NAD(+) + 4 H(+)(out)</text>
        <dbReference type="Rhea" id="RHEA:57888"/>
        <dbReference type="ChEBI" id="CHEBI:15378"/>
        <dbReference type="ChEBI" id="CHEBI:24646"/>
        <dbReference type="ChEBI" id="CHEBI:57540"/>
        <dbReference type="ChEBI" id="CHEBI:57945"/>
        <dbReference type="ChEBI" id="CHEBI:132124"/>
    </reaction>
</comment>
<comment type="cofactor">
    <cofactor evidence="1">
        <name>[4Fe-4S] cluster</name>
        <dbReference type="ChEBI" id="CHEBI:49883"/>
    </cofactor>
    <text evidence="1">Binds 1 [4Fe-4S] cluster.</text>
</comment>
<comment type="subunit">
    <text evidence="1">NDH-1 is composed of 14 different subunits. Subunits NuoB, C, D, E, F, and G constitute the peripheral sector of the complex.</text>
</comment>
<comment type="subcellular location">
    <subcellularLocation>
        <location evidence="1">Cell inner membrane</location>
        <topology evidence="1">Peripheral membrane protein</topology>
        <orientation evidence="1">Cytoplasmic side</orientation>
    </subcellularLocation>
</comment>
<comment type="similarity">
    <text evidence="1">Belongs to the complex I 20 kDa subunit family.</text>
</comment>
<keyword id="KW-0004">4Fe-4S</keyword>
<keyword id="KW-0997">Cell inner membrane</keyword>
<keyword id="KW-1003">Cell membrane</keyword>
<keyword id="KW-0408">Iron</keyword>
<keyword id="KW-0411">Iron-sulfur</keyword>
<keyword id="KW-0472">Membrane</keyword>
<keyword id="KW-0479">Metal-binding</keyword>
<keyword id="KW-0520">NAD</keyword>
<keyword id="KW-0874">Quinone</keyword>
<keyword id="KW-1185">Reference proteome</keyword>
<keyword id="KW-1278">Translocase</keyword>
<keyword id="KW-0813">Transport</keyword>
<keyword id="KW-0830">Ubiquinone</keyword>
<proteinExistence type="inferred from homology"/>
<evidence type="ECO:0000255" key="1">
    <source>
        <dbReference type="HAMAP-Rule" id="MF_01356"/>
    </source>
</evidence>
<accession>Q5NIN4</accession>